<organism>
    <name type="scientific">Helicobacter pylori (strain ATCC 700392 / 26695)</name>
    <name type="common">Campylobacter pylori</name>
    <dbReference type="NCBI Taxonomy" id="85962"/>
    <lineage>
        <taxon>Bacteria</taxon>
        <taxon>Pseudomonadati</taxon>
        <taxon>Campylobacterota</taxon>
        <taxon>Epsilonproteobacteria</taxon>
        <taxon>Campylobacterales</taxon>
        <taxon>Helicobacteraceae</taxon>
        <taxon>Helicobacter</taxon>
    </lineage>
</organism>
<evidence type="ECO:0000255" key="1">
    <source>
        <dbReference type="HAMAP-Rule" id="MF_00033"/>
    </source>
</evidence>
<dbReference type="EC" id="2.4.1.227" evidence="1"/>
<dbReference type="EMBL" id="AE000511">
    <property type="protein sequence ID" value="AAD08196.1"/>
    <property type="molecule type" value="Genomic_DNA"/>
</dbReference>
<dbReference type="PIR" id="C64664">
    <property type="entry name" value="C64664"/>
</dbReference>
<dbReference type="RefSeq" id="NP_207946.1">
    <property type="nucleotide sequence ID" value="NC_000915.1"/>
</dbReference>
<dbReference type="RefSeq" id="WP_000666573.1">
    <property type="nucleotide sequence ID" value="NC_018939.1"/>
</dbReference>
<dbReference type="SMR" id="O25770"/>
<dbReference type="FunCoup" id="O25770">
    <property type="interactions" value="228"/>
</dbReference>
<dbReference type="STRING" id="85962.HP_1155"/>
<dbReference type="CAZy" id="GT28">
    <property type="family name" value="Glycosyltransferase Family 28"/>
</dbReference>
<dbReference type="PaxDb" id="85962-C694_05965"/>
<dbReference type="EnsemblBacteria" id="AAD08196">
    <property type="protein sequence ID" value="AAD08196"/>
    <property type="gene ID" value="HP_1155"/>
</dbReference>
<dbReference type="KEGG" id="heo:C694_05965"/>
<dbReference type="KEGG" id="hpy:HP_1155"/>
<dbReference type="PATRIC" id="fig|85962.47.peg.1239"/>
<dbReference type="eggNOG" id="COG0707">
    <property type="taxonomic scope" value="Bacteria"/>
</dbReference>
<dbReference type="InParanoid" id="O25770"/>
<dbReference type="OrthoDB" id="9808936at2"/>
<dbReference type="PhylomeDB" id="O25770"/>
<dbReference type="UniPathway" id="UPA00219"/>
<dbReference type="Proteomes" id="UP000000429">
    <property type="component" value="Chromosome"/>
</dbReference>
<dbReference type="GO" id="GO:0005886">
    <property type="term" value="C:plasma membrane"/>
    <property type="evidence" value="ECO:0007669"/>
    <property type="project" value="UniProtKB-SubCell"/>
</dbReference>
<dbReference type="GO" id="GO:0051991">
    <property type="term" value="F:UDP-N-acetyl-D-glucosamine:N-acetylmuramoyl-L-alanyl-D-glutamyl-meso-2,6-diaminopimelyl-D-alanyl-D-alanine-diphosphoundecaprenol 4-beta-N-acetylglucosaminlytransferase activity"/>
    <property type="evidence" value="ECO:0007669"/>
    <property type="project" value="RHEA"/>
</dbReference>
<dbReference type="GO" id="GO:0050511">
    <property type="term" value="F:undecaprenyldiphospho-muramoylpentapeptide beta-N-acetylglucosaminyltransferase activity"/>
    <property type="evidence" value="ECO:0000318"/>
    <property type="project" value="GO_Central"/>
</dbReference>
<dbReference type="GO" id="GO:0005975">
    <property type="term" value="P:carbohydrate metabolic process"/>
    <property type="evidence" value="ECO:0007669"/>
    <property type="project" value="InterPro"/>
</dbReference>
<dbReference type="GO" id="GO:0051301">
    <property type="term" value="P:cell division"/>
    <property type="evidence" value="ECO:0007669"/>
    <property type="project" value="UniProtKB-KW"/>
</dbReference>
<dbReference type="GO" id="GO:0071555">
    <property type="term" value="P:cell wall organization"/>
    <property type="evidence" value="ECO:0007669"/>
    <property type="project" value="UniProtKB-KW"/>
</dbReference>
<dbReference type="GO" id="GO:0030259">
    <property type="term" value="P:lipid glycosylation"/>
    <property type="evidence" value="ECO:0007669"/>
    <property type="project" value="UniProtKB-UniRule"/>
</dbReference>
<dbReference type="GO" id="GO:0009252">
    <property type="term" value="P:peptidoglycan biosynthetic process"/>
    <property type="evidence" value="ECO:0007669"/>
    <property type="project" value="UniProtKB-UniRule"/>
</dbReference>
<dbReference type="GO" id="GO:0008360">
    <property type="term" value="P:regulation of cell shape"/>
    <property type="evidence" value="ECO:0007669"/>
    <property type="project" value="UniProtKB-KW"/>
</dbReference>
<dbReference type="CDD" id="cd03785">
    <property type="entry name" value="GT28_MurG"/>
    <property type="match status" value="1"/>
</dbReference>
<dbReference type="Gene3D" id="3.40.50.2000">
    <property type="entry name" value="Glycogen Phosphorylase B"/>
    <property type="match status" value="2"/>
</dbReference>
<dbReference type="HAMAP" id="MF_00033">
    <property type="entry name" value="MurG"/>
    <property type="match status" value="1"/>
</dbReference>
<dbReference type="InterPro" id="IPR006009">
    <property type="entry name" value="GlcNAc_MurG"/>
</dbReference>
<dbReference type="InterPro" id="IPR007235">
    <property type="entry name" value="Glyco_trans_28_C"/>
</dbReference>
<dbReference type="InterPro" id="IPR004276">
    <property type="entry name" value="GlycoTrans_28_N"/>
</dbReference>
<dbReference type="NCBIfam" id="TIGR01133">
    <property type="entry name" value="murG"/>
    <property type="match status" value="1"/>
</dbReference>
<dbReference type="PANTHER" id="PTHR21015:SF22">
    <property type="entry name" value="GLYCOSYLTRANSFERASE"/>
    <property type="match status" value="1"/>
</dbReference>
<dbReference type="PANTHER" id="PTHR21015">
    <property type="entry name" value="UDP-N-ACETYLGLUCOSAMINE--N-ACETYLMURAMYL-(PENTAPEPTIDE) PYROPHOSPHORYL-UNDECAPRENOL N-ACETYLGLUCOSAMINE TRANSFERASE 1"/>
    <property type="match status" value="1"/>
</dbReference>
<dbReference type="Pfam" id="PF04101">
    <property type="entry name" value="Glyco_tran_28_C"/>
    <property type="match status" value="1"/>
</dbReference>
<dbReference type="Pfam" id="PF03033">
    <property type="entry name" value="Glyco_transf_28"/>
    <property type="match status" value="1"/>
</dbReference>
<dbReference type="SUPFAM" id="SSF53756">
    <property type="entry name" value="UDP-Glycosyltransferase/glycogen phosphorylase"/>
    <property type="match status" value="1"/>
</dbReference>
<keyword id="KW-0131">Cell cycle</keyword>
<keyword id="KW-0132">Cell division</keyword>
<keyword id="KW-0997">Cell inner membrane</keyword>
<keyword id="KW-1003">Cell membrane</keyword>
<keyword id="KW-0133">Cell shape</keyword>
<keyword id="KW-0961">Cell wall biogenesis/degradation</keyword>
<keyword id="KW-0328">Glycosyltransferase</keyword>
<keyword id="KW-0472">Membrane</keyword>
<keyword id="KW-0573">Peptidoglycan synthesis</keyword>
<keyword id="KW-1185">Reference proteome</keyword>
<keyword id="KW-0808">Transferase</keyword>
<comment type="function">
    <text evidence="1">Cell wall formation. Catalyzes the transfer of a GlcNAc subunit on undecaprenyl-pyrophosphoryl-MurNAc-pentapeptide (lipid intermediate I) to form undecaprenyl-pyrophosphoryl-MurNAc-(pentapeptide)GlcNAc (lipid intermediate II).</text>
</comment>
<comment type="catalytic activity">
    <reaction evidence="1">
        <text>di-trans,octa-cis-undecaprenyl diphospho-N-acetyl-alpha-D-muramoyl-L-alanyl-D-glutamyl-meso-2,6-diaminopimeloyl-D-alanyl-D-alanine + UDP-N-acetyl-alpha-D-glucosamine = di-trans,octa-cis-undecaprenyl diphospho-[N-acetyl-alpha-D-glucosaminyl-(1-&gt;4)]-N-acetyl-alpha-D-muramoyl-L-alanyl-D-glutamyl-meso-2,6-diaminopimeloyl-D-alanyl-D-alanine + UDP + H(+)</text>
        <dbReference type="Rhea" id="RHEA:31227"/>
        <dbReference type="ChEBI" id="CHEBI:15378"/>
        <dbReference type="ChEBI" id="CHEBI:57705"/>
        <dbReference type="ChEBI" id="CHEBI:58223"/>
        <dbReference type="ChEBI" id="CHEBI:61387"/>
        <dbReference type="ChEBI" id="CHEBI:61388"/>
        <dbReference type="EC" id="2.4.1.227"/>
    </reaction>
</comment>
<comment type="pathway">
    <text evidence="1">Cell wall biogenesis; peptidoglycan biosynthesis.</text>
</comment>
<comment type="subcellular location">
    <subcellularLocation>
        <location evidence="1">Cell inner membrane</location>
        <topology evidence="1">Peripheral membrane protein</topology>
        <orientation evidence="1">Cytoplasmic side</orientation>
    </subcellularLocation>
</comment>
<comment type="similarity">
    <text evidence="1">Belongs to the glycosyltransferase 28 family. MurG subfamily.</text>
</comment>
<accession>O25770</accession>
<feature type="chain" id="PRO_0000109179" description="UDP-N-acetylglucosamine--N-acetylmuramyl-(pentapeptide) pyrophosphoryl-undecaprenol N-acetylglucosamine transferase">
    <location>
        <begin position="1"/>
        <end position="353"/>
    </location>
</feature>
<feature type="binding site" evidence="1">
    <location>
        <begin position="10"/>
        <end position="12"/>
    </location>
    <ligand>
        <name>UDP-N-acetyl-alpha-D-glucosamine</name>
        <dbReference type="ChEBI" id="CHEBI:57705"/>
    </ligand>
</feature>
<feature type="binding site" evidence="1">
    <location>
        <position position="124"/>
    </location>
    <ligand>
        <name>UDP-N-acetyl-alpha-D-glucosamine</name>
        <dbReference type="ChEBI" id="CHEBI:57705"/>
    </ligand>
</feature>
<feature type="binding site" evidence="1">
    <location>
        <position position="183"/>
    </location>
    <ligand>
        <name>UDP-N-acetyl-alpha-D-glucosamine</name>
        <dbReference type="ChEBI" id="CHEBI:57705"/>
    </ligand>
</feature>
<feature type="binding site" evidence="1">
    <location>
        <position position="283"/>
    </location>
    <ligand>
        <name>UDP-N-acetyl-alpha-D-glucosamine</name>
        <dbReference type="ChEBI" id="CHEBI:57705"/>
    </ligand>
</feature>
<gene>
    <name evidence="1" type="primary">murG</name>
    <name type="ordered locus">HP_1155</name>
</gene>
<sequence>MKFALTGGGTGGHLSIAKALAIELEKQGIEAIYLGSTYGQDKEWFENSPLFSERYFFNTQGVVNKSFFKKIGSLFLQAKAAFKAKEILKKHQITHTISVGGFSAGPASFASLLNKIPLYIHEQNAIKGSLNRYLSPKAKAVFSSYAFKDKGNHVLTSYPVQNAFFDFARTRTEIKHILFLGGSQGAKAINEFALLNAPKLTKQGIKITHICGPNSYEQVRFFYQELGLLDKIELFAFHNNITEIMHRADLCVSRAGASSVWELCANGLPTIFIPYPFASNNHQYYNVLEFEKENLCYVVPQNELLPKKLFEVIRKLNQKDDQGNKNLTTISNQLQQKIAKDGAKTIIETILSA</sequence>
<protein>
    <recommendedName>
        <fullName evidence="1">UDP-N-acetylglucosamine--N-acetylmuramyl-(pentapeptide) pyrophosphoryl-undecaprenol N-acetylglucosamine transferase</fullName>
        <ecNumber evidence="1">2.4.1.227</ecNumber>
    </recommendedName>
    <alternativeName>
        <fullName evidence="1">Undecaprenyl-PP-MurNAc-pentapeptide-UDPGlcNAc GlcNAc transferase</fullName>
    </alternativeName>
</protein>
<name>MURG_HELPY</name>
<proteinExistence type="inferred from homology"/>
<reference key="1">
    <citation type="journal article" date="1997" name="Nature">
        <title>The complete genome sequence of the gastric pathogen Helicobacter pylori.</title>
        <authorList>
            <person name="Tomb J.-F."/>
            <person name="White O."/>
            <person name="Kerlavage A.R."/>
            <person name="Clayton R.A."/>
            <person name="Sutton G.G."/>
            <person name="Fleischmann R.D."/>
            <person name="Ketchum K.A."/>
            <person name="Klenk H.-P."/>
            <person name="Gill S.R."/>
            <person name="Dougherty B.A."/>
            <person name="Nelson K.E."/>
            <person name="Quackenbush J."/>
            <person name="Zhou L."/>
            <person name="Kirkness E.F."/>
            <person name="Peterson S.N."/>
            <person name="Loftus B.J."/>
            <person name="Richardson D.L."/>
            <person name="Dodson R.J."/>
            <person name="Khalak H.G."/>
            <person name="Glodek A."/>
            <person name="McKenney K."/>
            <person name="FitzGerald L.M."/>
            <person name="Lee N."/>
            <person name="Adams M.D."/>
            <person name="Hickey E.K."/>
            <person name="Berg D.E."/>
            <person name="Gocayne J.D."/>
            <person name="Utterback T.R."/>
            <person name="Peterson J.D."/>
            <person name="Kelley J.M."/>
            <person name="Cotton M.D."/>
            <person name="Weidman J.F."/>
            <person name="Fujii C."/>
            <person name="Bowman C."/>
            <person name="Watthey L."/>
            <person name="Wallin E."/>
            <person name="Hayes W.S."/>
            <person name="Borodovsky M."/>
            <person name="Karp P.D."/>
            <person name="Smith H.O."/>
            <person name="Fraser C.M."/>
            <person name="Venter J.C."/>
        </authorList>
    </citation>
    <scope>NUCLEOTIDE SEQUENCE [LARGE SCALE GENOMIC DNA]</scope>
    <source>
        <strain>ATCC 700392 / 26695</strain>
    </source>
</reference>